<proteinExistence type="inferred from homology"/>
<reference key="1">
    <citation type="journal article" date="2009" name="PLoS Genet.">
        <title>Organised genome dynamics in the Escherichia coli species results in highly diverse adaptive paths.</title>
        <authorList>
            <person name="Touchon M."/>
            <person name="Hoede C."/>
            <person name="Tenaillon O."/>
            <person name="Barbe V."/>
            <person name="Baeriswyl S."/>
            <person name="Bidet P."/>
            <person name="Bingen E."/>
            <person name="Bonacorsi S."/>
            <person name="Bouchier C."/>
            <person name="Bouvet O."/>
            <person name="Calteau A."/>
            <person name="Chiapello H."/>
            <person name="Clermont O."/>
            <person name="Cruveiller S."/>
            <person name="Danchin A."/>
            <person name="Diard M."/>
            <person name="Dossat C."/>
            <person name="Karoui M.E."/>
            <person name="Frapy E."/>
            <person name="Garry L."/>
            <person name="Ghigo J.M."/>
            <person name="Gilles A.M."/>
            <person name="Johnson J."/>
            <person name="Le Bouguenec C."/>
            <person name="Lescat M."/>
            <person name="Mangenot S."/>
            <person name="Martinez-Jehanne V."/>
            <person name="Matic I."/>
            <person name="Nassif X."/>
            <person name="Oztas S."/>
            <person name="Petit M.A."/>
            <person name="Pichon C."/>
            <person name="Rouy Z."/>
            <person name="Ruf C.S."/>
            <person name="Schneider D."/>
            <person name="Tourret J."/>
            <person name="Vacherie B."/>
            <person name="Vallenet D."/>
            <person name="Medigue C."/>
            <person name="Rocha E.P.C."/>
            <person name="Denamur E."/>
        </authorList>
    </citation>
    <scope>NUCLEOTIDE SEQUENCE [LARGE SCALE GENOMIC DNA]</scope>
    <source>
        <strain>ATCC 35469 / DSM 13698 / BCRC 15582 / CCUG 18766 / IAM 14443 / JCM 21226 / LMG 7866 / NBRC 102419 / NCTC 12128 / CDC 0568-73</strain>
    </source>
</reference>
<organism>
    <name type="scientific">Escherichia fergusonii (strain ATCC 35469 / DSM 13698 / CCUG 18766 / IAM 14443 / JCM 21226 / LMG 7866 / NBRC 102419 / NCTC 12128 / CDC 0568-73)</name>
    <dbReference type="NCBI Taxonomy" id="585054"/>
    <lineage>
        <taxon>Bacteria</taxon>
        <taxon>Pseudomonadati</taxon>
        <taxon>Pseudomonadota</taxon>
        <taxon>Gammaproteobacteria</taxon>
        <taxon>Enterobacterales</taxon>
        <taxon>Enterobacteriaceae</taxon>
        <taxon>Escherichia</taxon>
    </lineage>
</organism>
<feature type="chain" id="PRO_1000200361" description="tRNA uridine(34) hydroxylase">
    <location>
        <begin position="1"/>
        <end position="350"/>
    </location>
</feature>
<feature type="domain" description="Rhodanese" evidence="1">
    <location>
        <begin position="146"/>
        <end position="240"/>
    </location>
</feature>
<feature type="active site" description="Cysteine persulfide intermediate" evidence="1">
    <location>
        <position position="200"/>
    </location>
</feature>
<name>TRHO_ESCF3</name>
<keyword id="KW-0560">Oxidoreductase</keyword>
<keyword id="KW-0819">tRNA processing</keyword>
<sequence length="350" mass="40017">MPVLHNRISNDALKAKMLAENEPRTTISFYKYFTIADPQTTRDALYKLFTALNVFGRVYLAHEGINAQISVPESHVDKFRQQLYSFDPALNNLRLNIALDDDGKSFWVLRMKVRERIVADGITDPDFDASNVGNYLQAAQVNAMLDDPDALFIDMRNHYEYEVGHFENAMEIPADTFREQLPKAVEMMQEHKDKKIVMYCTGGIRCEKASAWMKHNGFEKVWHIEGGIIEYARKAREQGLPVRFIGKNFVFDERMGERISEDVIAHCHQCGTPCDSHTNCKNDGCHLLFIQCPVCAEKFNGCCSELCCTESALPPEEQRRLRAGRENGNKIFNKSRGRLNTQQGIPELKI</sequence>
<comment type="function">
    <text evidence="1">Catalyzes oxygen-dependent 5-hydroxyuridine (ho5U) modification at position 34 in tRNAs.</text>
</comment>
<comment type="catalytic activity">
    <reaction evidence="1">
        <text>uridine(34) in tRNA + AH2 + O2 = 5-hydroxyuridine(34) in tRNA + A + H2O</text>
        <dbReference type="Rhea" id="RHEA:64224"/>
        <dbReference type="Rhea" id="RHEA-COMP:11727"/>
        <dbReference type="Rhea" id="RHEA-COMP:13381"/>
        <dbReference type="ChEBI" id="CHEBI:13193"/>
        <dbReference type="ChEBI" id="CHEBI:15377"/>
        <dbReference type="ChEBI" id="CHEBI:15379"/>
        <dbReference type="ChEBI" id="CHEBI:17499"/>
        <dbReference type="ChEBI" id="CHEBI:65315"/>
        <dbReference type="ChEBI" id="CHEBI:136877"/>
    </reaction>
</comment>
<comment type="similarity">
    <text evidence="1">Belongs to the TrhO family.</text>
</comment>
<evidence type="ECO:0000255" key="1">
    <source>
        <dbReference type="HAMAP-Rule" id="MF_00469"/>
    </source>
</evidence>
<accession>B7LT80</accession>
<dbReference type="EC" id="1.14.-.-" evidence="1"/>
<dbReference type="EMBL" id="CU928158">
    <property type="protein sequence ID" value="CAQ89384.1"/>
    <property type="molecule type" value="Genomic_DNA"/>
</dbReference>
<dbReference type="RefSeq" id="WP_001144610.1">
    <property type="nucleotide sequence ID" value="NC_011740.1"/>
</dbReference>
<dbReference type="SMR" id="B7LT80"/>
<dbReference type="KEGG" id="efe:EFER_1873"/>
<dbReference type="HOGENOM" id="CLU_038878_1_1_6"/>
<dbReference type="OrthoDB" id="9778326at2"/>
<dbReference type="Proteomes" id="UP000000745">
    <property type="component" value="Chromosome"/>
</dbReference>
<dbReference type="GO" id="GO:0016705">
    <property type="term" value="F:oxidoreductase activity, acting on paired donors, with incorporation or reduction of molecular oxygen"/>
    <property type="evidence" value="ECO:0007669"/>
    <property type="project" value="UniProtKB-UniRule"/>
</dbReference>
<dbReference type="GO" id="GO:0006400">
    <property type="term" value="P:tRNA modification"/>
    <property type="evidence" value="ECO:0007669"/>
    <property type="project" value="UniProtKB-UniRule"/>
</dbReference>
<dbReference type="CDD" id="cd01518">
    <property type="entry name" value="RHOD_YceA"/>
    <property type="match status" value="1"/>
</dbReference>
<dbReference type="Gene3D" id="3.30.70.100">
    <property type="match status" value="1"/>
</dbReference>
<dbReference type="Gene3D" id="3.40.250.10">
    <property type="entry name" value="Rhodanese-like domain"/>
    <property type="match status" value="1"/>
</dbReference>
<dbReference type="HAMAP" id="MF_00469">
    <property type="entry name" value="TrhO"/>
    <property type="match status" value="1"/>
</dbReference>
<dbReference type="InterPro" id="IPR001763">
    <property type="entry name" value="Rhodanese-like_dom"/>
</dbReference>
<dbReference type="InterPro" id="IPR036873">
    <property type="entry name" value="Rhodanese-like_dom_sf"/>
</dbReference>
<dbReference type="InterPro" id="IPR022111">
    <property type="entry name" value="Rhodanese_C"/>
</dbReference>
<dbReference type="InterPro" id="IPR020936">
    <property type="entry name" value="TrhO"/>
</dbReference>
<dbReference type="InterPro" id="IPR040503">
    <property type="entry name" value="TRHO_N"/>
</dbReference>
<dbReference type="NCBIfam" id="NF001133">
    <property type="entry name" value="PRK00142.1-1"/>
    <property type="match status" value="1"/>
</dbReference>
<dbReference type="PANTHER" id="PTHR43846:SF1">
    <property type="entry name" value="TRNA URIDINE(34) HYDROXYLASE"/>
    <property type="match status" value="1"/>
</dbReference>
<dbReference type="PANTHER" id="PTHR43846">
    <property type="entry name" value="UPF0176 PROTEIN YCEA"/>
    <property type="match status" value="1"/>
</dbReference>
<dbReference type="Pfam" id="PF00581">
    <property type="entry name" value="Rhodanese"/>
    <property type="match status" value="1"/>
</dbReference>
<dbReference type="Pfam" id="PF12368">
    <property type="entry name" value="Rhodanese_C"/>
    <property type="match status" value="1"/>
</dbReference>
<dbReference type="Pfam" id="PF17773">
    <property type="entry name" value="UPF0176_N"/>
    <property type="match status" value="1"/>
</dbReference>
<dbReference type="SMART" id="SM00450">
    <property type="entry name" value="RHOD"/>
    <property type="match status" value="1"/>
</dbReference>
<dbReference type="SUPFAM" id="SSF52821">
    <property type="entry name" value="Rhodanese/Cell cycle control phosphatase"/>
    <property type="match status" value="1"/>
</dbReference>
<dbReference type="PROSITE" id="PS50206">
    <property type="entry name" value="RHODANESE_3"/>
    <property type="match status" value="1"/>
</dbReference>
<protein>
    <recommendedName>
        <fullName evidence="1">tRNA uridine(34) hydroxylase</fullName>
        <ecNumber evidence="1">1.14.-.-</ecNumber>
    </recommendedName>
    <alternativeName>
        <fullName evidence="1">tRNA hydroxylation protein O</fullName>
    </alternativeName>
</protein>
<gene>
    <name evidence="1" type="primary">trhO</name>
    <name type="synonym">yceA</name>
    <name type="ordered locus">EFER_1873</name>
</gene>